<gene>
    <name evidence="1" type="primary">rpmB</name>
    <name type="ordered locus">Rpic_2713</name>
</gene>
<reference key="1">
    <citation type="submission" date="2008-05" db="EMBL/GenBank/DDBJ databases">
        <title>Complete sequence of chromosome 1 of Ralstonia pickettii 12J.</title>
        <authorList>
            <person name="Lucas S."/>
            <person name="Copeland A."/>
            <person name="Lapidus A."/>
            <person name="Glavina del Rio T."/>
            <person name="Dalin E."/>
            <person name="Tice H."/>
            <person name="Bruce D."/>
            <person name="Goodwin L."/>
            <person name="Pitluck S."/>
            <person name="Meincke L."/>
            <person name="Brettin T."/>
            <person name="Detter J.C."/>
            <person name="Han C."/>
            <person name="Kuske C.R."/>
            <person name="Schmutz J."/>
            <person name="Larimer F."/>
            <person name="Land M."/>
            <person name="Hauser L."/>
            <person name="Kyrpides N."/>
            <person name="Mikhailova N."/>
            <person name="Marsh T."/>
            <person name="Richardson P."/>
        </authorList>
    </citation>
    <scope>NUCLEOTIDE SEQUENCE [LARGE SCALE GENOMIC DNA]</scope>
    <source>
        <strain>12J</strain>
    </source>
</reference>
<name>RL28_RALPJ</name>
<comment type="similarity">
    <text evidence="1">Belongs to the bacterial ribosomal protein bL28 family.</text>
</comment>
<keyword id="KW-0687">Ribonucleoprotein</keyword>
<keyword id="KW-0689">Ribosomal protein</keyword>
<evidence type="ECO:0000255" key="1">
    <source>
        <dbReference type="HAMAP-Rule" id="MF_00373"/>
    </source>
</evidence>
<evidence type="ECO:0000305" key="2"/>
<dbReference type="EMBL" id="CP001068">
    <property type="protein sequence ID" value="ACD27838.1"/>
    <property type="molecule type" value="Genomic_DNA"/>
</dbReference>
<dbReference type="SMR" id="B2UAP1"/>
<dbReference type="STRING" id="402626.Rpic_2713"/>
<dbReference type="KEGG" id="rpi:Rpic_2713"/>
<dbReference type="eggNOG" id="COG0227">
    <property type="taxonomic scope" value="Bacteria"/>
</dbReference>
<dbReference type="HOGENOM" id="CLU_064548_3_1_4"/>
<dbReference type="GO" id="GO:0022625">
    <property type="term" value="C:cytosolic large ribosomal subunit"/>
    <property type="evidence" value="ECO:0007669"/>
    <property type="project" value="TreeGrafter"/>
</dbReference>
<dbReference type="GO" id="GO:0003735">
    <property type="term" value="F:structural constituent of ribosome"/>
    <property type="evidence" value="ECO:0007669"/>
    <property type="project" value="InterPro"/>
</dbReference>
<dbReference type="GO" id="GO:0006412">
    <property type="term" value="P:translation"/>
    <property type="evidence" value="ECO:0007669"/>
    <property type="project" value="UniProtKB-UniRule"/>
</dbReference>
<dbReference type="FunFam" id="2.30.170.40:FF:000001">
    <property type="entry name" value="50S ribosomal protein L28"/>
    <property type="match status" value="1"/>
</dbReference>
<dbReference type="Gene3D" id="2.30.170.40">
    <property type="entry name" value="Ribosomal protein L28/L24"/>
    <property type="match status" value="1"/>
</dbReference>
<dbReference type="HAMAP" id="MF_00373">
    <property type="entry name" value="Ribosomal_bL28"/>
    <property type="match status" value="1"/>
</dbReference>
<dbReference type="InterPro" id="IPR026569">
    <property type="entry name" value="Ribosomal_bL28"/>
</dbReference>
<dbReference type="InterPro" id="IPR034704">
    <property type="entry name" value="Ribosomal_bL28/bL31-like_sf"/>
</dbReference>
<dbReference type="InterPro" id="IPR001383">
    <property type="entry name" value="Ribosomal_bL28_bact-type"/>
</dbReference>
<dbReference type="InterPro" id="IPR037147">
    <property type="entry name" value="Ribosomal_bL28_sf"/>
</dbReference>
<dbReference type="NCBIfam" id="TIGR00009">
    <property type="entry name" value="L28"/>
    <property type="match status" value="1"/>
</dbReference>
<dbReference type="PANTHER" id="PTHR13528">
    <property type="entry name" value="39S RIBOSOMAL PROTEIN L28, MITOCHONDRIAL"/>
    <property type="match status" value="1"/>
</dbReference>
<dbReference type="PANTHER" id="PTHR13528:SF2">
    <property type="entry name" value="LARGE RIBOSOMAL SUBUNIT PROTEIN BL28M"/>
    <property type="match status" value="1"/>
</dbReference>
<dbReference type="Pfam" id="PF00830">
    <property type="entry name" value="Ribosomal_L28"/>
    <property type="match status" value="1"/>
</dbReference>
<dbReference type="SUPFAM" id="SSF143800">
    <property type="entry name" value="L28p-like"/>
    <property type="match status" value="1"/>
</dbReference>
<accession>B2UAP1</accession>
<protein>
    <recommendedName>
        <fullName evidence="1">Large ribosomal subunit protein bL28</fullName>
    </recommendedName>
    <alternativeName>
        <fullName evidence="2">50S ribosomal protein L28</fullName>
    </alternativeName>
</protein>
<feature type="chain" id="PRO_1000121675" description="Large ribosomal subunit protein bL28">
    <location>
        <begin position="1"/>
        <end position="77"/>
    </location>
</feature>
<sequence length="77" mass="8816">MARVCQVTGKAPMVGNNVSHANNKTKRRFLPNLQNRRFWVESENRWVSLRVSNAGLRLIDKKGIDEVLVDLRARGEV</sequence>
<proteinExistence type="inferred from homology"/>
<organism>
    <name type="scientific">Ralstonia pickettii (strain 12J)</name>
    <dbReference type="NCBI Taxonomy" id="402626"/>
    <lineage>
        <taxon>Bacteria</taxon>
        <taxon>Pseudomonadati</taxon>
        <taxon>Pseudomonadota</taxon>
        <taxon>Betaproteobacteria</taxon>
        <taxon>Burkholderiales</taxon>
        <taxon>Burkholderiaceae</taxon>
        <taxon>Ralstonia</taxon>
    </lineage>
</organism>